<evidence type="ECO:0000255" key="1">
    <source>
        <dbReference type="HAMAP-Rule" id="MF_01701"/>
    </source>
</evidence>
<dbReference type="EC" id="7.3.2.3" evidence="1"/>
<dbReference type="EMBL" id="AE016823">
    <property type="protein sequence ID" value="AAS71091.1"/>
    <property type="molecule type" value="Genomic_DNA"/>
</dbReference>
<dbReference type="RefSeq" id="WP_000510777.1">
    <property type="nucleotide sequence ID" value="NC_005823.1"/>
</dbReference>
<dbReference type="SMR" id="Q72PE5"/>
<dbReference type="KEGG" id="lic:LIC_12526"/>
<dbReference type="HOGENOM" id="CLU_000604_1_1_12"/>
<dbReference type="Proteomes" id="UP000007037">
    <property type="component" value="Chromosome I"/>
</dbReference>
<dbReference type="GO" id="GO:0043190">
    <property type="term" value="C:ATP-binding cassette (ABC) transporter complex"/>
    <property type="evidence" value="ECO:0007669"/>
    <property type="project" value="InterPro"/>
</dbReference>
<dbReference type="GO" id="GO:0015419">
    <property type="term" value="F:ABC-type sulfate transporter activity"/>
    <property type="evidence" value="ECO:0007669"/>
    <property type="project" value="InterPro"/>
</dbReference>
<dbReference type="GO" id="GO:0102025">
    <property type="term" value="F:ABC-type thiosulfate transporter activity"/>
    <property type="evidence" value="ECO:0007669"/>
    <property type="project" value="RHEA"/>
</dbReference>
<dbReference type="GO" id="GO:0005524">
    <property type="term" value="F:ATP binding"/>
    <property type="evidence" value="ECO:0007669"/>
    <property type="project" value="UniProtKB-KW"/>
</dbReference>
<dbReference type="GO" id="GO:0016887">
    <property type="term" value="F:ATP hydrolysis activity"/>
    <property type="evidence" value="ECO:0007669"/>
    <property type="project" value="InterPro"/>
</dbReference>
<dbReference type="CDD" id="cd03296">
    <property type="entry name" value="ABC_CysA_sulfate_importer"/>
    <property type="match status" value="1"/>
</dbReference>
<dbReference type="FunFam" id="3.40.50.300:FF:000227">
    <property type="entry name" value="Sulfate/thiosulfate import ATP-binding protein CysA"/>
    <property type="match status" value="1"/>
</dbReference>
<dbReference type="Gene3D" id="2.40.50.100">
    <property type="match status" value="1"/>
</dbReference>
<dbReference type="Gene3D" id="3.40.50.300">
    <property type="entry name" value="P-loop containing nucleotide triphosphate hydrolases"/>
    <property type="match status" value="1"/>
</dbReference>
<dbReference type="InterPro" id="IPR003593">
    <property type="entry name" value="AAA+_ATPase"/>
</dbReference>
<dbReference type="InterPro" id="IPR050093">
    <property type="entry name" value="ABC_SmlMolc_Importer"/>
</dbReference>
<dbReference type="InterPro" id="IPR003439">
    <property type="entry name" value="ABC_transporter-like_ATP-bd"/>
</dbReference>
<dbReference type="InterPro" id="IPR017871">
    <property type="entry name" value="ABC_transporter-like_CS"/>
</dbReference>
<dbReference type="InterPro" id="IPR041193">
    <property type="entry name" value="CysA_C"/>
</dbReference>
<dbReference type="InterPro" id="IPR008995">
    <property type="entry name" value="Mo/tungstate-bd_C_term_dom"/>
</dbReference>
<dbReference type="InterPro" id="IPR027417">
    <property type="entry name" value="P-loop_NTPase"/>
</dbReference>
<dbReference type="InterPro" id="IPR005666">
    <property type="entry name" value="Sulph_transpt1"/>
</dbReference>
<dbReference type="InterPro" id="IPR024765">
    <property type="entry name" value="TOBE-like"/>
</dbReference>
<dbReference type="NCBIfam" id="TIGR00968">
    <property type="entry name" value="3a0106s01"/>
    <property type="match status" value="1"/>
</dbReference>
<dbReference type="PANTHER" id="PTHR42781">
    <property type="entry name" value="SPERMIDINE/PUTRESCINE IMPORT ATP-BINDING PROTEIN POTA"/>
    <property type="match status" value="1"/>
</dbReference>
<dbReference type="PANTHER" id="PTHR42781:SF4">
    <property type="entry name" value="SPERMIDINE_PUTRESCINE IMPORT ATP-BINDING PROTEIN POTA"/>
    <property type="match status" value="1"/>
</dbReference>
<dbReference type="Pfam" id="PF00005">
    <property type="entry name" value="ABC_tran"/>
    <property type="match status" value="1"/>
</dbReference>
<dbReference type="Pfam" id="PF17850">
    <property type="entry name" value="CysA_C_terminal"/>
    <property type="match status" value="1"/>
</dbReference>
<dbReference type="Pfam" id="PF12857">
    <property type="entry name" value="TOBE_3"/>
    <property type="match status" value="1"/>
</dbReference>
<dbReference type="SMART" id="SM00382">
    <property type="entry name" value="AAA"/>
    <property type="match status" value="1"/>
</dbReference>
<dbReference type="SUPFAM" id="SSF50331">
    <property type="entry name" value="MOP-like"/>
    <property type="match status" value="1"/>
</dbReference>
<dbReference type="SUPFAM" id="SSF52540">
    <property type="entry name" value="P-loop containing nucleoside triphosphate hydrolases"/>
    <property type="match status" value="1"/>
</dbReference>
<dbReference type="PROSITE" id="PS00211">
    <property type="entry name" value="ABC_TRANSPORTER_1"/>
    <property type="match status" value="1"/>
</dbReference>
<dbReference type="PROSITE" id="PS50893">
    <property type="entry name" value="ABC_TRANSPORTER_2"/>
    <property type="match status" value="1"/>
</dbReference>
<dbReference type="PROSITE" id="PS51237">
    <property type="entry name" value="CYSA"/>
    <property type="match status" value="1"/>
</dbReference>
<proteinExistence type="inferred from homology"/>
<name>CYSA_LEPIC</name>
<reference key="1">
    <citation type="journal article" date="2004" name="J. Bacteriol.">
        <title>Comparative genomics of two Leptospira interrogans serovars reveals novel insights into physiology and pathogenesis.</title>
        <authorList>
            <person name="Nascimento A.L.T.O."/>
            <person name="Ko A.I."/>
            <person name="Martins E.A.L."/>
            <person name="Monteiro-Vitorello C.B."/>
            <person name="Ho P.L."/>
            <person name="Haake D.A."/>
            <person name="Verjovski-Almeida S."/>
            <person name="Hartskeerl R.A."/>
            <person name="Marques M.V."/>
            <person name="Oliveira M.C."/>
            <person name="Menck C.F.M."/>
            <person name="Leite L.C.C."/>
            <person name="Carrer H."/>
            <person name="Coutinho L.L."/>
            <person name="Degrave W.M."/>
            <person name="Dellagostin O.A."/>
            <person name="El-Dorry H."/>
            <person name="Ferro E.S."/>
            <person name="Ferro M.I.T."/>
            <person name="Furlan L.R."/>
            <person name="Gamberini M."/>
            <person name="Giglioti E.A."/>
            <person name="Goes-Neto A."/>
            <person name="Goldman G.H."/>
            <person name="Goldman M.H.S."/>
            <person name="Harakava R."/>
            <person name="Jeronimo S.M.B."/>
            <person name="Junqueira-de-Azevedo I.L.M."/>
            <person name="Kimura E.T."/>
            <person name="Kuramae E.E."/>
            <person name="Lemos E.G.M."/>
            <person name="Lemos M.V.F."/>
            <person name="Marino C.L."/>
            <person name="Nunes L.R."/>
            <person name="de Oliveira R.C."/>
            <person name="Pereira G.G."/>
            <person name="Reis M.S."/>
            <person name="Schriefer A."/>
            <person name="Siqueira W.J."/>
            <person name="Sommer P."/>
            <person name="Tsai S.M."/>
            <person name="Simpson A.J.G."/>
            <person name="Ferro J.A."/>
            <person name="Camargo L.E.A."/>
            <person name="Kitajima J.P."/>
            <person name="Setubal J.C."/>
            <person name="Van Sluys M.A."/>
        </authorList>
    </citation>
    <scope>NUCLEOTIDE SEQUENCE [LARGE SCALE GENOMIC DNA]</scope>
    <source>
        <strain>Fiocruz L1-130</strain>
    </source>
</reference>
<organism>
    <name type="scientific">Leptospira interrogans serogroup Icterohaemorrhagiae serovar copenhageni (strain Fiocruz L1-130)</name>
    <dbReference type="NCBI Taxonomy" id="267671"/>
    <lineage>
        <taxon>Bacteria</taxon>
        <taxon>Pseudomonadati</taxon>
        <taxon>Spirochaetota</taxon>
        <taxon>Spirochaetia</taxon>
        <taxon>Leptospirales</taxon>
        <taxon>Leptospiraceae</taxon>
        <taxon>Leptospira</taxon>
    </lineage>
</organism>
<gene>
    <name evidence="1" type="primary">cysA</name>
    <name type="ordered locus">LIC_12526</name>
</gene>
<feature type="chain" id="PRO_0000092270" description="Sulfate/thiosulfate import ATP-binding protein CysA">
    <location>
        <begin position="1"/>
        <end position="356"/>
    </location>
</feature>
<feature type="domain" description="ABC transporter" evidence="1">
    <location>
        <begin position="3"/>
        <end position="237"/>
    </location>
</feature>
<feature type="binding site" evidence="1">
    <location>
        <begin position="35"/>
        <end position="42"/>
    </location>
    <ligand>
        <name>ATP</name>
        <dbReference type="ChEBI" id="CHEBI:30616"/>
    </ligand>
</feature>
<sequence length="356" mass="40302">MGIEVKNLVKRFGNFTAIDDLSLDVPSGELVALLGPSGSGKTTLLRIIAGLEDADKGQVIFEGREVGKKNAKDRGVGFVFQHYALFRHMTIFENIAFGLEVRKRSERPSKDTIRDKVMSLLKLVQLENFYNRYPSELSGGQRQRIALARALAIEPRFLLLDEPFGALDAKVRKELRNWLRRLHDEIHITSVFVTHDQEEALEVSDKVVILRSGKIEQVGTPDEVYNHPKNSFVFHFLGDVNLFHGRVQGGQTQLGEIKVDTPEHSEIENASAVGYVRPYDVEILREPIEAQTIPAEIQYIHSTGRNVKIDLKRLDTGTILESQLNSSEFQSLNLLPGETVHIRFKKIKVYVEDYTI</sequence>
<accession>Q72PE5</accession>
<comment type="function">
    <text evidence="1">Part of the ABC transporter complex CysAWTP involved in sulfate/thiosulfate import. Responsible for energy coupling to the transport system.</text>
</comment>
<comment type="catalytic activity">
    <reaction evidence="1">
        <text>sulfate(out) + ATP + H2O = sulfate(in) + ADP + phosphate + H(+)</text>
        <dbReference type="Rhea" id="RHEA:10192"/>
        <dbReference type="ChEBI" id="CHEBI:15377"/>
        <dbReference type="ChEBI" id="CHEBI:15378"/>
        <dbReference type="ChEBI" id="CHEBI:16189"/>
        <dbReference type="ChEBI" id="CHEBI:30616"/>
        <dbReference type="ChEBI" id="CHEBI:43474"/>
        <dbReference type="ChEBI" id="CHEBI:456216"/>
        <dbReference type="EC" id="7.3.2.3"/>
    </reaction>
</comment>
<comment type="catalytic activity">
    <reaction evidence="1">
        <text>thiosulfate(out) + ATP + H2O = thiosulfate(in) + ADP + phosphate + H(+)</text>
        <dbReference type="Rhea" id="RHEA:29871"/>
        <dbReference type="ChEBI" id="CHEBI:15377"/>
        <dbReference type="ChEBI" id="CHEBI:15378"/>
        <dbReference type="ChEBI" id="CHEBI:30616"/>
        <dbReference type="ChEBI" id="CHEBI:33542"/>
        <dbReference type="ChEBI" id="CHEBI:43474"/>
        <dbReference type="ChEBI" id="CHEBI:456216"/>
        <dbReference type="EC" id="7.3.2.3"/>
    </reaction>
</comment>
<comment type="subunit">
    <text evidence="1">The complex is composed of two ATP-binding proteins (CysA), two transmembrane proteins (CysT and CysW) and a solute-binding protein (CysP).</text>
</comment>
<comment type="subcellular location">
    <subcellularLocation>
        <location evidence="1">Cell inner membrane</location>
        <topology evidence="1">Peripheral membrane protein</topology>
    </subcellularLocation>
</comment>
<comment type="similarity">
    <text evidence="1">Belongs to the ABC transporter superfamily. Sulfate/tungstate importer (TC 3.A.1.6) family.</text>
</comment>
<keyword id="KW-0067">ATP-binding</keyword>
<keyword id="KW-0997">Cell inner membrane</keyword>
<keyword id="KW-1003">Cell membrane</keyword>
<keyword id="KW-0472">Membrane</keyword>
<keyword id="KW-0547">Nucleotide-binding</keyword>
<keyword id="KW-0764">Sulfate transport</keyword>
<keyword id="KW-1278">Translocase</keyword>
<keyword id="KW-0813">Transport</keyword>
<protein>
    <recommendedName>
        <fullName evidence="1">Sulfate/thiosulfate import ATP-binding protein CysA</fullName>
        <ecNumber evidence="1">7.3.2.3</ecNumber>
    </recommendedName>
    <alternativeName>
        <fullName evidence="1">Sulfate-transporting ATPase</fullName>
    </alternativeName>
</protein>